<sequence length="932" mass="99223">MTEFLPFVARHIGPRHEDERAMLAALGLPSMETLITQAVPASIRLNRALNLPAALSEADALAELGTIMGRNVVKKSFIGAGYHGVHTPPVIQRNLFENPAWYTAYTPYQSEISQGRLELLFHFQTLVAELTGLPVACASLLDEATAVAEAIGVACRHHRDKRSRILLAGELHPQTVDVVNTRAEPLGWEIATGSDVDDNTAAIVVPWPDTRGVYGDFAKVIADAKAKGALVIAVADPLALTIMEAPARWGADMAVGSMQRYGVPMGFGGPHAAYLAVSEALTRIIPGRIVGQSVDAHGRAAYRLALQTREQHIRRDKATSNICTAQALLANMAAAFAIWHGPAGLQAIATRVAALAARFAAALKAAGVEIAGESLFDTVTAKVPGKAAAIAAEADKGGRLIRIIDADTVGVTFDETSTEEDLTALASLFGAKPVGGDTVLVPGKERGEGFLTQEVFHSHRSETEMMRFLRRLADKDLALDRAMIPLGSCTMKLNAAAEMMPVSWNTVANLHPFAPAEQVQGYAKMTSDLEAWLCEITGFAGVSLQPNAGSQGEYAGLMAIRHYHQARGQGHRNICLIPSSAHGTNPASASMAGMSVVVVNCRPDGDIDIDDLKAKAEKHRDNLAAFMITYPSTYGVFEEGIKAFCEIVHDNGGQVYFDGANLNALVGLARPADIGADVCHMNLHKTFCIPHGGGGPGVGPIGVAKHLVPYLPGHVEAGSEHAVAAAQFGSASILVITWMYIRMMGGAGLKKATEAAILNANYIAHRLKGVYPILYTGAHDRVAHECIVDTRVLKDSAGITVEDVAKRLIDYGFHAPTMSWPVAGTLMIEPTESEPKLEIDRLCDAMIAIAGEAKKVADGVWPADDNPLANAPHTASDTLATEWKHPYTREEAVFPGGAFDPTAKYWPPVSRVDNVGGDRNLICSCPPVAAYG</sequence>
<name>GCSP_BRUMB</name>
<reference key="1">
    <citation type="submission" date="2009-03" db="EMBL/GenBank/DDBJ databases">
        <title>Brucella melitensis ATCC 23457 whole genome shotgun sequencing project.</title>
        <authorList>
            <person name="Setubal J.C."/>
            <person name="Boyle S."/>
            <person name="Crasta O.R."/>
            <person name="Gillespie J.J."/>
            <person name="Kenyon R.W."/>
            <person name="Lu J."/>
            <person name="Mane S."/>
            <person name="Nagrani S."/>
            <person name="Shallom J.M."/>
            <person name="Shallom S."/>
            <person name="Shukla M."/>
            <person name="Snyder E.E."/>
            <person name="Sobral B.W."/>
            <person name="Wattam A.R."/>
            <person name="Will R."/>
            <person name="Williams K."/>
            <person name="Yoo H."/>
            <person name="Munk C."/>
            <person name="Tapia R."/>
            <person name="Han C."/>
            <person name="Detter J.C."/>
            <person name="Bruce D."/>
            <person name="Brettin T.S."/>
        </authorList>
    </citation>
    <scope>NUCLEOTIDE SEQUENCE [LARGE SCALE GENOMIC DNA]</scope>
    <source>
        <strain>ATCC 23457</strain>
    </source>
</reference>
<feature type="chain" id="PRO_1000147962" description="Glycine dehydrogenase (decarboxylating)">
    <location>
        <begin position="1"/>
        <end position="932"/>
    </location>
</feature>
<feature type="modified residue" description="N6-(pyridoxal phosphate)lysine" evidence="1">
    <location>
        <position position="685"/>
    </location>
</feature>
<comment type="function">
    <text evidence="1">The glycine cleavage system catalyzes the degradation of glycine. The P protein binds the alpha-amino group of glycine through its pyridoxal phosphate cofactor; CO(2) is released and the remaining methylamine moiety is then transferred to the lipoamide cofactor of the H protein.</text>
</comment>
<comment type="catalytic activity">
    <reaction evidence="1">
        <text>N(6)-[(R)-lipoyl]-L-lysyl-[glycine-cleavage complex H protein] + glycine + H(+) = N(6)-[(R)-S(8)-aminomethyldihydrolipoyl]-L-lysyl-[glycine-cleavage complex H protein] + CO2</text>
        <dbReference type="Rhea" id="RHEA:24304"/>
        <dbReference type="Rhea" id="RHEA-COMP:10494"/>
        <dbReference type="Rhea" id="RHEA-COMP:10495"/>
        <dbReference type="ChEBI" id="CHEBI:15378"/>
        <dbReference type="ChEBI" id="CHEBI:16526"/>
        <dbReference type="ChEBI" id="CHEBI:57305"/>
        <dbReference type="ChEBI" id="CHEBI:83099"/>
        <dbReference type="ChEBI" id="CHEBI:83143"/>
        <dbReference type="EC" id="1.4.4.2"/>
    </reaction>
</comment>
<comment type="cofactor">
    <cofactor evidence="1">
        <name>pyridoxal 5'-phosphate</name>
        <dbReference type="ChEBI" id="CHEBI:597326"/>
    </cofactor>
</comment>
<comment type="subunit">
    <text evidence="1">The glycine cleavage system is composed of four proteins: P, T, L and H.</text>
</comment>
<comment type="similarity">
    <text evidence="1">Belongs to the GcvP family.</text>
</comment>
<organism>
    <name type="scientific">Brucella melitensis biotype 2 (strain ATCC 23457)</name>
    <dbReference type="NCBI Taxonomy" id="546272"/>
    <lineage>
        <taxon>Bacteria</taxon>
        <taxon>Pseudomonadati</taxon>
        <taxon>Pseudomonadota</taxon>
        <taxon>Alphaproteobacteria</taxon>
        <taxon>Hyphomicrobiales</taxon>
        <taxon>Brucellaceae</taxon>
        <taxon>Brucella/Ochrobactrum group</taxon>
        <taxon>Brucella</taxon>
    </lineage>
</organism>
<dbReference type="EC" id="1.4.4.2" evidence="1"/>
<dbReference type="EMBL" id="CP001489">
    <property type="protein sequence ID" value="ACO02514.1"/>
    <property type="molecule type" value="Genomic_DNA"/>
</dbReference>
<dbReference type="RefSeq" id="WP_004684905.1">
    <property type="nucleotide sequence ID" value="NC_012442.1"/>
</dbReference>
<dbReference type="SMR" id="C0RLN1"/>
<dbReference type="KEGG" id="bmi:BMEA_B0701"/>
<dbReference type="HOGENOM" id="CLU_004620_2_1_5"/>
<dbReference type="PRO" id="PR:C0RLN1"/>
<dbReference type="Proteomes" id="UP000001748">
    <property type="component" value="Chromosome II"/>
</dbReference>
<dbReference type="GO" id="GO:0005829">
    <property type="term" value="C:cytosol"/>
    <property type="evidence" value="ECO:0007669"/>
    <property type="project" value="TreeGrafter"/>
</dbReference>
<dbReference type="GO" id="GO:0005960">
    <property type="term" value="C:glycine cleavage complex"/>
    <property type="evidence" value="ECO:0007669"/>
    <property type="project" value="TreeGrafter"/>
</dbReference>
<dbReference type="GO" id="GO:0016594">
    <property type="term" value="F:glycine binding"/>
    <property type="evidence" value="ECO:0007669"/>
    <property type="project" value="TreeGrafter"/>
</dbReference>
<dbReference type="GO" id="GO:0004375">
    <property type="term" value="F:glycine dehydrogenase (decarboxylating) activity"/>
    <property type="evidence" value="ECO:0007669"/>
    <property type="project" value="UniProtKB-EC"/>
</dbReference>
<dbReference type="GO" id="GO:0030170">
    <property type="term" value="F:pyridoxal phosphate binding"/>
    <property type="evidence" value="ECO:0007669"/>
    <property type="project" value="TreeGrafter"/>
</dbReference>
<dbReference type="GO" id="GO:0019464">
    <property type="term" value="P:glycine decarboxylation via glycine cleavage system"/>
    <property type="evidence" value="ECO:0007669"/>
    <property type="project" value="UniProtKB-UniRule"/>
</dbReference>
<dbReference type="CDD" id="cd00613">
    <property type="entry name" value="GDC-P"/>
    <property type="match status" value="2"/>
</dbReference>
<dbReference type="FunFam" id="3.90.1150.10:FF:000007">
    <property type="entry name" value="Glycine dehydrogenase (decarboxylating), mitochondrial"/>
    <property type="match status" value="1"/>
</dbReference>
<dbReference type="FunFam" id="3.40.640.10:FF:000007">
    <property type="entry name" value="glycine dehydrogenase (Decarboxylating), mitochondrial"/>
    <property type="match status" value="1"/>
</dbReference>
<dbReference type="Gene3D" id="3.90.1150.10">
    <property type="entry name" value="Aspartate Aminotransferase, domain 1"/>
    <property type="match status" value="2"/>
</dbReference>
<dbReference type="Gene3D" id="3.40.640.10">
    <property type="entry name" value="Type I PLP-dependent aspartate aminotransferase-like (Major domain)"/>
    <property type="match status" value="2"/>
</dbReference>
<dbReference type="HAMAP" id="MF_00711">
    <property type="entry name" value="GcvP"/>
    <property type="match status" value="1"/>
</dbReference>
<dbReference type="InterPro" id="IPR003437">
    <property type="entry name" value="GcvP"/>
</dbReference>
<dbReference type="InterPro" id="IPR049316">
    <property type="entry name" value="GDC-P_C"/>
</dbReference>
<dbReference type="InterPro" id="IPR049315">
    <property type="entry name" value="GDC-P_N"/>
</dbReference>
<dbReference type="InterPro" id="IPR020581">
    <property type="entry name" value="GDC_P"/>
</dbReference>
<dbReference type="InterPro" id="IPR015424">
    <property type="entry name" value="PyrdxlP-dep_Trfase"/>
</dbReference>
<dbReference type="InterPro" id="IPR015421">
    <property type="entry name" value="PyrdxlP-dep_Trfase_major"/>
</dbReference>
<dbReference type="InterPro" id="IPR015422">
    <property type="entry name" value="PyrdxlP-dep_Trfase_small"/>
</dbReference>
<dbReference type="NCBIfam" id="TIGR00461">
    <property type="entry name" value="gcvP"/>
    <property type="match status" value="1"/>
</dbReference>
<dbReference type="NCBIfam" id="NF003346">
    <property type="entry name" value="PRK04366.1"/>
    <property type="match status" value="1"/>
</dbReference>
<dbReference type="PANTHER" id="PTHR11773:SF1">
    <property type="entry name" value="GLYCINE DEHYDROGENASE (DECARBOXYLATING), MITOCHONDRIAL"/>
    <property type="match status" value="1"/>
</dbReference>
<dbReference type="PANTHER" id="PTHR11773">
    <property type="entry name" value="GLYCINE DEHYDROGENASE, DECARBOXYLATING"/>
    <property type="match status" value="1"/>
</dbReference>
<dbReference type="Pfam" id="PF21478">
    <property type="entry name" value="GcvP2_C"/>
    <property type="match status" value="1"/>
</dbReference>
<dbReference type="Pfam" id="PF02347">
    <property type="entry name" value="GDC-P"/>
    <property type="match status" value="2"/>
</dbReference>
<dbReference type="SUPFAM" id="SSF53383">
    <property type="entry name" value="PLP-dependent transferases"/>
    <property type="match status" value="2"/>
</dbReference>
<evidence type="ECO:0000255" key="1">
    <source>
        <dbReference type="HAMAP-Rule" id="MF_00711"/>
    </source>
</evidence>
<proteinExistence type="inferred from homology"/>
<gene>
    <name evidence="1" type="primary">gcvP</name>
    <name type="ordered locus">BMEA_B0701</name>
</gene>
<accession>C0RLN1</accession>
<keyword id="KW-0560">Oxidoreductase</keyword>
<keyword id="KW-0663">Pyridoxal phosphate</keyword>
<protein>
    <recommendedName>
        <fullName evidence="1">Glycine dehydrogenase (decarboxylating)</fullName>
        <ecNumber evidence="1">1.4.4.2</ecNumber>
    </recommendedName>
    <alternativeName>
        <fullName evidence="1">Glycine cleavage system P-protein</fullName>
    </alternativeName>
    <alternativeName>
        <fullName evidence="1">Glycine decarboxylase</fullName>
    </alternativeName>
    <alternativeName>
        <fullName evidence="1">Glycine dehydrogenase (aminomethyl-transferring)</fullName>
    </alternativeName>
</protein>